<dbReference type="EMBL" id="CP000029">
    <property type="protein sequence ID" value="AAW54142.1"/>
    <property type="molecule type" value="Genomic_DNA"/>
</dbReference>
<dbReference type="RefSeq" id="WP_002446233.1">
    <property type="nucleotide sequence ID" value="NC_002976.3"/>
</dbReference>
<dbReference type="SMR" id="Q5HQ03"/>
<dbReference type="STRING" id="176279.SERP0754"/>
<dbReference type="KEGG" id="ser:SERP0754"/>
<dbReference type="eggNOG" id="COG1799">
    <property type="taxonomic scope" value="Bacteria"/>
</dbReference>
<dbReference type="HOGENOM" id="CLU_078499_4_1_9"/>
<dbReference type="Proteomes" id="UP000000531">
    <property type="component" value="Chromosome"/>
</dbReference>
<dbReference type="GO" id="GO:0005737">
    <property type="term" value="C:cytoplasm"/>
    <property type="evidence" value="ECO:0007669"/>
    <property type="project" value="UniProtKB-SubCell"/>
</dbReference>
<dbReference type="GO" id="GO:0000917">
    <property type="term" value="P:division septum assembly"/>
    <property type="evidence" value="ECO:0007669"/>
    <property type="project" value="UniProtKB-KW"/>
</dbReference>
<dbReference type="GO" id="GO:0043093">
    <property type="term" value="P:FtsZ-dependent cytokinesis"/>
    <property type="evidence" value="ECO:0007669"/>
    <property type="project" value="UniProtKB-UniRule"/>
</dbReference>
<dbReference type="Gene3D" id="3.30.110.150">
    <property type="entry name" value="SepF-like protein"/>
    <property type="match status" value="1"/>
</dbReference>
<dbReference type="HAMAP" id="MF_01197">
    <property type="entry name" value="SepF"/>
    <property type="match status" value="1"/>
</dbReference>
<dbReference type="InterPro" id="IPR023052">
    <property type="entry name" value="Cell_div_SepF"/>
</dbReference>
<dbReference type="InterPro" id="IPR007561">
    <property type="entry name" value="Cell_div_SepF/SepF-rel"/>
</dbReference>
<dbReference type="InterPro" id="IPR038594">
    <property type="entry name" value="SepF-like_sf"/>
</dbReference>
<dbReference type="PANTHER" id="PTHR35798">
    <property type="entry name" value="CELL DIVISION PROTEIN SEPF"/>
    <property type="match status" value="1"/>
</dbReference>
<dbReference type="PANTHER" id="PTHR35798:SF1">
    <property type="entry name" value="CELL DIVISION PROTEIN SEPF"/>
    <property type="match status" value="1"/>
</dbReference>
<dbReference type="Pfam" id="PF04472">
    <property type="entry name" value="SepF"/>
    <property type="match status" value="1"/>
</dbReference>
<reference key="1">
    <citation type="journal article" date="2005" name="J. Bacteriol.">
        <title>Insights on evolution of virulence and resistance from the complete genome analysis of an early methicillin-resistant Staphylococcus aureus strain and a biofilm-producing methicillin-resistant Staphylococcus epidermidis strain.</title>
        <authorList>
            <person name="Gill S.R."/>
            <person name="Fouts D.E."/>
            <person name="Archer G.L."/>
            <person name="Mongodin E.F."/>
            <person name="DeBoy R.T."/>
            <person name="Ravel J."/>
            <person name="Paulsen I.T."/>
            <person name="Kolonay J.F."/>
            <person name="Brinkac L.M."/>
            <person name="Beanan M.J."/>
            <person name="Dodson R.J."/>
            <person name="Daugherty S.C."/>
            <person name="Madupu R."/>
            <person name="Angiuoli S.V."/>
            <person name="Durkin A.S."/>
            <person name="Haft D.H."/>
            <person name="Vamathevan J.J."/>
            <person name="Khouri H."/>
            <person name="Utterback T.R."/>
            <person name="Lee C."/>
            <person name="Dimitrov G."/>
            <person name="Jiang L."/>
            <person name="Qin H."/>
            <person name="Weidman J."/>
            <person name="Tran K."/>
            <person name="Kang K.H."/>
            <person name="Hance I.R."/>
            <person name="Nelson K.E."/>
            <person name="Fraser C.M."/>
        </authorList>
    </citation>
    <scope>NUCLEOTIDE SEQUENCE [LARGE SCALE GENOMIC DNA]</scope>
    <source>
        <strain>ATCC 35984 / DSM 28319 / BCRC 17069 / CCUG 31568 / BM 3577 / RP62A</strain>
    </source>
</reference>
<name>SEPF_STAEQ</name>
<proteinExistence type="inferred from homology"/>
<feature type="chain" id="PRO_0000334088" description="Cell division protein SepF">
    <location>
        <begin position="1"/>
        <end position="197"/>
    </location>
</feature>
<feature type="region of interest" description="Disordered" evidence="2">
    <location>
        <begin position="15"/>
        <end position="89"/>
    </location>
</feature>
<feature type="compositionally biased region" description="Basic and acidic residues" evidence="2">
    <location>
        <begin position="22"/>
        <end position="42"/>
    </location>
</feature>
<feature type="compositionally biased region" description="Polar residues" evidence="2">
    <location>
        <begin position="43"/>
        <end position="73"/>
    </location>
</feature>
<feature type="compositionally biased region" description="Low complexity" evidence="2">
    <location>
        <begin position="80"/>
        <end position="89"/>
    </location>
</feature>
<sequence>MALKDLFNNFFVVEEEEEVEGPEERESSRSRERVQEREDYNRNENQATPQTFNNKQQAIKSVPQKNTLRSNTTSEERNYRMNNNSKNNSRNVVTMNQASQSYTAQESSKMCLFEPRVFSDTQDIADELKNRRATLVNLQRIDQVSAKRIIDFLSGTVYAIGGDIQRVGTDIFLCTPDNVEVAGSITDHIENMEQHYE</sequence>
<accession>Q5HQ03</accession>
<comment type="function">
    <text evidence="1">Cell division protein that is part of the divisome complex and is recruited early to the Z-ring. Probably stimulates Z-ring formation, perhaps through the cross-linking of FtsZ protofilaments. Its function overlaps with FtsA.</text>
</comment>
<comment type="subunit">
    <text evidence="1">Homodimer. Interacts with FtsZ.</text>
</comment>
<comment type="subcellular location">
    <subcellularLocation>
        <location evidence="1">Cytoplasm</location>
    </subcellularLocation>
    <text evidence="1">Localizes to the division site, in a FtsZ-dependent manner.</text>
</comment>
<comment type="similarity">
    <text evidence="1">Belongs to the SepF family.</text>
</comment>
<keyword id="KW-0131">Cell cycle</keyword>
<keyword id="KW-0132">Cell division</keyword>
<keyword id="KW-0963">Cytoplasm</keyword>
<keyword id="KW-1185">Reference proteome</keyword>
<keyword id="KW-0717">Septation</keyword>
<organism>
    <name type="scientific">Staphylococcus epidermidis (strain ATCC 35984 / DSM 28319 / BCRC 17069 / CCUG 31568 / BM 3577 / RP62A)</name>
    <dbReference type="NCBI Taxonomy" id="176279"/>
    <lineage>
        <taxon>Bacteria</taxon>
        <taxon>Bacillati</taxon>
        <taxon>Bacillota</taxon>
        <taxon>Bacilli</taxon>
        <taxon>Bacillales</taxon>
        <taxon>Staphylococcaceae</taxon>
        <taxon>Staphylococcus</taxon>
    </lineage>
</organism>
<evidence type="ECO:0000255" key="1">
    <source>
        <dbReference type="HAMAP-Rule" id="MF_01197"/>
    </source>
</evidence>
<evidence type="ECO:0000256" key="2">
    <source>
        <dbReference type="SAM" id="MobiDB-lite"/>
    </source>
</evidence>
<gene>
    <name evidence="1" type="primary">sepF</name>
    <name type="ordered locus">SERP0754</name>
</gene>
<protein>
    <recommendedName>
        <fullName evidence="1">Cell division protein SepF</fullName>
    </recommendedName>
</protein>